<gene>
    <name evidence="1" type="primary">bioW</name>
    <name type="ordered locus">SAHV_2407</name>
</gene>
<organism>
    <name type="scientific">Staphylococcus aureus (strain Mu3 / ATCC 700698)</name>
    <dbReference type="NCBI Taxonomy" id="418127"/>
    <lineage>
        <taxon>Bacteria</taxon>
        <taxon>Bacillati</taxon>
        <taxon>Bacillota</taxon>
        <taxon>Bacilli</taxon>
        <taxon>Bacillales</taxon>
        <taxon>Staphylococcaceae</taxon>
        <taxon>Staphylococcus</taxon>
    </lineage>
</organism>
<sequence>MYSIKMRSSNQDVHISGAETICEFDKIEQTVQRFYNKGFFHENGQPDFLNIKIQKIMEPIQQIKALQIIEDDKANLQHLTQECGVTEQALNQGMTYIKNETVYTGAIILSAISGKRLDSFGQRGIRATHFSFEDINNKGDLNERVTDALAIASCINAHPYVKGELCVSDDLTYTTGYFAAAKIGYHRLFDIKPVNTRYGGRIIFVDDCIDLNHYISFLESTPKQVVYETV</sequence>
<evidence type="ECO:0000255" key="1">
    <source>
        <dbReference type="HAMAP-Rule" id="MF_00668"/>
    </source>
</evidence>
<proteinExistence type="inferred from homology"/>
<name>BIOW_STAA1</name>
<accession>A7X666</accession>
<comment type="function">
    <text evidence="1">Catalyzes the transformation of pimelate into pimeloyl-CoA with concomitant hydrolysis of ATP to AMP.</text>
</comment>
<comment type="catalytic activity">
    <reaction evidence="1">
        <text>heptanedioate + ATP + CoA = 6-carboxyhexanoyl-CoA + AMP + diphosphate</text>
        <dbReference type="Rhea" id="RHEA:14781"/>
        <dbReference type="ChEBI" id="CHEBI:30616"/>
        <dbReference type="ChEBI" id="CHEBI:33019"/>
        <dbReference type="ChEBI" id="CHEBI:36165"/>
        <dbReference type="ChEBI" id="CHEBI:57287"/>
        <dbReference type="ChEBI" id="CHEBI:57360"/>
        <dbReference type="ChEBI" id="CHEBI:456215"/>
        <dbReference type="EC" id="6.2.1.14"/>
    </reaction>
</comment>
<comment type="cofactor">
    <cofactor evidence="1">
        <name>Mg(2+)</name>
        <dbReference type="ChEBI" id="CHEBI:18420"/>
    </cofactor>
</comment>
<comment type="pathway">
    <text evidence="1">Metabolic intermediate metabolism; pimeloyl-CoA biosynthesis; pimeloyl-CoA from pimelate: step 1/1.</text>
</comment>
<comment type="subunit">
    <text evidence="1">Homodimer.</text>
</comment>
<comment type="similarity">
    <text evidence="1">Belongs to the BioW family.</text>
</comment>
<keyword id="KW-0067">ATP-binding</keyword>
<keyword id="KW-0093">Biotin biosynthesis</keyword>
<keyword id="KW-0436">Ligase</keyword>
<keyword id="KW-0460">Magnesium</keyword>
<keyword id="KW-0547">Nucleotide-binding</keyword>
<protein>
    <recommendedName>
        <fullName evidence="1">6-carboxyhexanoate--CoA ligase</fullName>
        <ecNumber evidence="1">6.2.1.14</ecNumber>
    </recommendedName>
    <alternativeName>
        <fullName evidence="1">Pimeloyl-CoA synthase</fullName>
    </alternativeName>
</protein>
<reference key="1">
    <citation type="journal article" date="2008" name="Antimicrob. Agents Chemother.">
        <title>Mutated response regulator graR is responsible for phenotypic conversion of Staphylococcus aureus from heterogeneous vancomycin-intermediate resistance to vancomycin-intermediate resistance.</title>
        <authorList>
            <person name="Neoh H.-M."/>
            <person name="Cui L."/>
            <person name="Yuzawa H."/>
            <person name="Takeuchi F."/>
            <person name="Matsuo M."/>
            <person name="Hiramatsu K."/>
        </authorList>
    </citation>
    <scope>NUCLEOTIDE SEQUENCE [LARGE SCALE GENOMIC DNA]</scope>
    <source>
        <strain>Mu3 / ATCC 700698</strain>
    </source>
</reference>
<dbReference type="EC" id="6.2.1.14" evidence="1"/>
<dbReference type="EMBL" id="AP009324">
    <property type="protein sequence ID" value="BAF79290.1"/>
    <property type="molecule type" value="Genomic_DNA"/>
</dbReference>
<dbReference type="RefSeq" id="WP_000286875.1">
    <property type="nucleotide sequence ID" value="NZ_CTYB01000005.1"/>
</dbReference>
<dbReference type="SMR" id="A7X666"/>
<dbReference type="KEGG" id="saw:SAHV_2407"/>
<dbReference type="HOGENOM" id="CLU_076858_0_0_9"/>
<dbReference type="UniPathway" id="UPA00999">
    <property type="reaction ID" value="UER00351"/>
</dbReference>
<dbReference type="GO" id="GO:0042410">
    <property type="term" value="F:6-carboxyhexanoate-CoA ligase activity"/>
    <property type="evidence" value="ECO:0007669"/>
    <property type="project" value="UniProtKB-UniRule"/>
</dbReference>
<dbReference type="GO" id="GO:0005524">
    <property type="term" value="F:ATP binding"/>
    <property type="evidence" value="ECO:0007669"/>
    <property type="project" value="UniProtKB-KW"/>
</dbReference>
<dbReference type="GO" id="GO:0000287">
    <property type="term" value="F:magnesium ion binding"/>
    <property type="evidence" value="ECO:0007669"/>
    <property type="project" value="UniProtKB-UniRule"/>
</dbReference>
<dbReference type="GO" id="GO:0009102">
    <property type="term" value="P:biotin biosynthetic process"/>
    <property type="evidence" value="ECO:0007669"/>
    <property type="project" value="UniProtKB-UniRule"/>
</dbReference>
<dbReference type="HAMAP" id="MF_00668">
    <property type="entry name" value="BioW"/>
    <property type="match status" value="1"/>
</dbReference>
<dbReference type="InterPro" id="IPR005499">
    <property type="entry name" value="BioW"/>
</dbReference>
<dbReference type="NCBIfam" id="NF002360">
    <property type="entry name" value="PRK01322.1"/>
    <property type="match status" value="1"/>
</dbReference>
<dbReference type="Pfam" id="PF03744">
    <property type="entry name" value="BioW"/>
    <property type="match status" value="1"/>
</dbReference>
<feature type="chain" id="PRO_1000044695" description="6-carboxyhexanoate--CoA ligase">
    <location>
        <begin position="1"/>
        <end position="230"/>
    </location>
</feature>